<organism>
    <name type="scientific">Streptococcus gordonii (strain Challis / ATCC 35105 / BCRC 15272 / CH1 / DL1 / V288)</name>
    <dbReference type="NCBI Taxonomy" id="467705"/>
    <lineage>
        <taxon>Bacteria</taxon>
        <taxon>Bacillati</taxon>
        <taxon>Bacillota</taxon>
        <taxon>Bacilli</taxon>
        <taxon>Lactobacillales</taxon>
        <taxon>Streptococcaceae</taxon>
        <taxon>Streptococcus</taxon>
    </lineage>
</organism>
<comment type="function">
    <text evidence="6 8">Adhesin that mediates binding of bacteria to a variety of host cells. Plays a role in the bacterial invasion of dentinal tubules (PubMed:9393810). A host immunostimulatory component, it modulates the innate immunity response. Plays a protective role against some antibiotics and cationic antimicrobial peptides (histatin-5, HTN3, but not beta-defensin 4A, DEFB4A) (PubMed:22609749).</text>
</comment>
<comment type="subcellular location">
    <subcellularLocation>
        <location evidence="2 5 11">Secreted</location>
        <location evidence="2 5 11">Cell wall</location>
        <topology evidence="2">Peptidoglycan-anchor</topology>
    </subcellularLocation>
    <subcellularLocation>
        <location evidence="8">Cell surface</location>
        <topology evidence="2">Peptidoglycan-anchor</topology>
    </subcellularLocation>
</comment>
<comment type="induction">
    <text evidence="8">In the absence of the sspA gene, collagen does not induce sspB (at protein level).</text>
</comment>
<comment type="disruption phenotype">
    <text evidence="5 6 8">Single sspA deletion, bacteria invade human dental roots less well, adhere less well to collagen, decreased accumulation of mature SspB; double sspA-sspB deletion, no invasion of dental roots, collagen adherence is further reduced, as is chaining on soluble collagen (PubMed:9393810). Triple sspA-sspB-hsa deletion no longer causes human platelet aggregation; double sspA-sspB deletion still causes platelet aggregation (PubMed:19884334). Double sspA-sspB adheres better to human epithelial cells and is internalized better than wild-type cells, but induces less host cytokine production (IL-6, IL-8, monocyte chemotactic protein). Stimulates less cytokine production in mouse bone marrow-derived dendritic cells (IL-6, IL-10, IL-12, tumor necrosis factor). Increased sensitivity to antibiotics polymyxin B and nisin, and human histatin-5 (His3-(20-43)-peptide, HTN3). In intranasal mouse infection, the double mutant is cleared less quickly from lungs, neutrophil, hemokine and cytokine production are delayed or reduced (PubMed:22609749).</text>
</comment>
<comment type="miscellaneous">
    <text evidence="7">S.gordonii, a commensal oral cavity bacteria, is among the bacteria most frequently identified as being the primary etiological agents of subacute infective endocarditis (found in 13% of cases).</text>
</comment>
<comment type="similarity">
    <text evidence="10">Belongs to the antigen I/II family.</text>
</comment>
<keyword id="KW-0134">Cell wall</keyword>
<keyword id="KW-0214">Dental caries</keyword>
<keyword id="KW-0572">Peptidoglycan-anchor</keyword>
<keyword id="KW-1185">Reference proteome</keyword>
<keyword id="KW-0677">Repeat</keyword>
<keyword id="KW-0964">Secreted</keyword>
<keyword id="KW-0732">Signal</keyword>
<keyword id="KW-0843">Virulence</keyword>
<gene>
    <name evidence="9" type="primary">sspB</name>
    <name type="ordered locus">SGO_0211</name>
</gene>
<proteinExistence type="evidence at protein level"/>
<accession>A8AUS1</accession>
<name>SSPB_STRGC</name>
<feature type="signal peptide" evidence="1">
    <location>
        <begin position="1"/>
        <end position="37"/>
    </location>
</feature>
<feature type="chain" id="PRO_5002717041" description="Streptococcal surface protein B" evidence="1">
    <location>
        <begin position="38"/>
        <end position="1499"/>
    </location>
</feature>
<feature type="propeptide" id="PRO_5018359053" description="Removed by sortase" evidence="2">
    <location>
        <begin position="1470"/>
        <end position="1499"/>
    </location>
</feature>
<feature type="repeat" description="Ag I/II A 1" evidence="3">
    <location>
        <begin position="145"/>
        <end position="219"/>
    </location>
</feature>
<feature type="repeat" description="Ag I/II A 2" evidence="3">
    <location>
        <begin position="220"/>
        <end position="301"/>
    </location>
</feature>
<feature type="repeat" description="Ag I/II A 3" evidence="3">
    <location>
        <begin position="302"/>
        <end position="383"/>
    </location>
</feature>
<feature type="repeat" description="Ag I/II A 4" evidence="3">
    <location>
        <begin position="384"/>
        <end position="465"/>
    </location>
</feature>
<feature type="region of interest" description="Disordered" evidence="4">
    <location>
        <begin position="50"/>
        <end position="84"/>
    </location>
</feature>
<feature type="region of interest" description="Disordered" evidence="4">
    <location>
        <begin position="689"/>
        <end position="709"/>
    </location>
</feature>
<feature type="region of interest" description="Disordered" evidence="4">
    <location>
        <begin position="763"/>
        <end position="907"/>
    </location>
</feature>
<feature type="region of interest" description="Disordered" evidence="4">
    <location>
        <begin position="1409"/>
        <end position="1472"/>
    </location>
</feature>
<feature type="short sequence motif" description="LPXTG sorting signal" evidence="2">
    <location>
        <begin position="1466"/>
        <end position="1470"/>
    </location>
</feature>
<feature type="compositionally biased region" description="Basic and acidic residues" evidence="4">
    <location>
        <begin position="694"/>
        <end position="705"/>
    </location>
</feature>
<feature type="compositionally biased region" description="Pro residues" evidence="4">
    <location>
        <begin position="789"/>
        <end position="799"/>
    </location>
</feature>
<feature type="compositionally biased region" description="Basic and acidic residues" evidence="4">
    <location>
        <begin position="800"/>
        <end position="815"/>
    </location>
</feature>
<feature type="compositionally biased region" description="Pro residues" evidence="4">
    <location>
        <begin position="828"/>
        <end position="838"/>
    </location>
</feature>
<feature type="compositionally biased region" description="Basic and acidic residues" evidence="4">
    <location>
        <begin position="839"/>
        <end position="854"/>
    </location>
</feature>
<feature type="compositionally biased region" description="Pro residues" evidence="4">
    <location>
        <begin position="867"/>
        <end position="877"/>
    </location>
</feature>
<feature type="compositionally biased region" description="Pro residues" evidence="4">
    <location>
        <begin position="888"/>
        <end position="907"/>
    </location>
</feature>
<feature type="compositionally biased region" description="Basic and acidic residues" evidence="4">
    <location>
        <begin position="1428"/>
        <end position="1450"/>
    </location>
</feature>
<feature type="modified residue" description="Pentaglycyl murein peptidoglycan amidated threonine" evidence="2">
    <location>
        <position position="1469"/>
    </location>
</feature>
<protein>
    <recommendedName>
        <fullName>Streptococcal surface protein B</fullName>
    </recommendedName>
    <alternativeName>
        <fullName>Adhesin SspB</fullName>
    </alternativeName>
</protein>
<reference key="1">
    <citation type="journal article" date="2007" name="J. Bacteriol.">
        <title>Genome-wide transcriptional changes in Streptococcus gordonii in response to competence signaling peptide.</title>
        <authorList>
            <person name="Vickerman M.M."/>
            <person name="Iobst S."/>
            <person name="Jesionowski A.M."/>
            <person name="Gill S.R."/>
        </authorList>
    </citation>
    <scope>NUCLEOTIDE SEQUENCE [LARGE SCALE GENOMIC DNA]</scope>
    <source>
        <strain>Challis / ATCC 35105 / BCRC 15272 / CH1 / DL1 / V288</strain>
    </source>
</reference>
<reference key="2">
    <citation type="journal article" date="1993" name="J. Med. Microbiol.">
        <title>Identity of viridans streptococci isolated from cases of infective endocarditis.</title>
        <authorList>
            <person name="Douglas C.W."/>
            <person name="Heath J."/>
            <person name="Hampton K.K."/>
            <person name="Preston F.E."/>
        </authorList>
    </citation>
    <scope>S.GORDONII IN INFECTIVE ENDOCARDITIS</scope>
</reference>
<reference key="3">
    <citation type="journal article" date="1997" name="Infect. Immun.">
        <title>Invasion of dentinal tubules by oral streptococci is associated with collagen recognition mediated by the antigen I/II family of polypeptides.</title>
        <authorList>
            <person name="Love R.M."/>
            <person name="McMillan M.D."/>
            <person name="Jenkinson H.F."/>
        </authorList>
    </citation>
    <scope>FUNCTION</scope>
    <scope>SUBCELLULAR LOCATION</scope>
    <scope>NOT INDUCED BY COLLAGEN</scope>
    <scope>DISRUPTION PHENOTYPE</scope>
    <source>
        <strain>Challis / ATCC 35105 / BCRC 15272 / CH1 / DL1 / V288</strain>
    </source>
</reference>
<reference key="4">
    <citation type="journal article" date="2010" name="Infect. Immun.">
        <title>Human platelets recognize a novel surface protein, PadA, on Streptococcus gordonii through a unique interaction involving fibrinogen receptor GPIIbIIIa.</title>
        <authorList>
            <person name="Petersen H.J."/>
            <person name="Keane C."/>
            <person name="Jenkinson H.F."/>
            <person name="Vickerman M.M."/>
            <person name="Jesionowski A."/>
            <person name="Waterhouse J.C."/>
            <person name="Cox D."/>
            <person name="Kerrigan S.W."/>
        </authorList>
    </citation>
    <scope>SUBCELLULAR LOCATION</scope>
    <scope>DISRUPTION PHENOTYPE</scope>
    <source>
        <strain>Challis / ATCC 35105 / BCRC 15272 / CH1 / DL1 / V288</strain>
    </source>
</reference>
<reference key="5">
    <citation type="journal article" date="2012" name="Microbiology">
        <title>Role of surface proteins SspA and SspB of Streptococcus gordonii in innate immunity.</title>
        <authorList>
            <person name="Andrian E."/>
            <person name="Qi G."/>
            <person name="Wang J."/>
            <person name="Halperin S.A."/>
            <person name="Lee S.F."/>
        </authorList>
    </citation>
    <scope>FUNCTION</scope>
    <scope>DISRUPTION PHENOTYPE</scope>
    <source>
        <strain>Challis / ATCC 35105 / BCRC 15272 / CH1 / DL1 / V288</strain>
    </source>
</reference>
<dbReference type="EMBL" id="CP000725">
    <property type="protein sequence ID" value="ABV10074.1"/>
    <property type="molecule type" value="Genomic_DNA"/>
</dbReference>
<dbReference type="RefSeq" id="WP_011999748.1">
    <property type="nucleotide sequence ID" value="NC_009785.1"/>
</dbReference>
<dbReference type="SMR" id="A8AUS1"/>
<dbReference type="STRING" id="467705.SGO_0211"/>
<dbReference type="KEGG" id="sgo:SGO_0211"/>
<dbReference type="eggNOG" id="COG3064">
    <property type="taxonomic scope" value="Bacteria"/>
</dbReference>
<dbReference type="eggNOG" id="COG3087">
    <property type="taxonomic scope" value="Bacteria"/>
</dbReference>
<dbReference type="HOGENOM" id="CLU_257994_0_0_9"/>
<dbReference type="Proteomes" id="UP000001131">
    <property type="component" value="Chromosome"/>
</dbReference>
<dbReference type="GO" id="GO:0009986">
    <property type="term" value="C:cell surface"/>
    <property type="evidence" value="ECO:0007669"/>
    <property type="project" value="UniProtKB-SubCell"/>
</dbReference>
<dbReference type="GO" id="GO:0005576">
    <property type="term" value="C:extracellular region"/>
    <property type="evidence" value="ECO:0007669"/>
    <property type="project" value="UniProtKB-KW"/>
</dbReference>
<dbReference type="FunFam" id="2.60.40.740:FF:000001">
    <property type="entry name" value="Major cell-surface adhesin PAc"/>
    <property type="match status" value="1"/>
</dbReference>
<dbReference type="Gene3D" id="2.60.40.740">
    <property type="match status" value="3"/>
</dbReference>
<dbReference type="Gene3D" id="6.10.250.2200">
    <property type="match status" value="3"/>
</dbReference>
<dbReference type="Gene3D" id="2.60.530.10">
    <property type="entry name" value="Major cell-surface adhesin PAc"/>
    <property type="match status" value="1"/>
</dbReference>
<dbReference type="InterPro" id="IPR026345">
    <property type="entry name" value="Adh_isopep-form_adh_dom"/>
</dbReference>
<dbReference type="InterPro" id="IPR041324">
    <property type="entry name" value="AgI/II_N"/>
</dbReference>
<dbReference type="InterPro" id="IPR032300">
    <property type="entry name" value="Antigen_C"/>
</dbReference>
<dbReference type="InterPro" id="IPR021197">
    <property type="entry name" value="Cross-wall-target_lipo_motif"/>
</dbReference>
<dbReference type="InterPro" id="IPR013574">
    <property type="entry name" value="Glucan-bd_C/Surface_Ag-I/II_V"/>
</dbReference>
<dbReference type="InterPro" id="IPR019931">
    <property type="entry name" value="LPXTG_anchor"/>
</dbReference>
<dbReference type="InterPro" id="IPR036234">
    <property type="entry name" value="SA_I/II_PAC_V_sf"/>
</dbReference>
<dbReference type="InterPro" id="IPR009578">
    <property type="entry name" value="Surface_Ag_I_II_A_rpt"/>
</dbReference>
<dbReference type="NCBIfam" id="TIGR04228">
    <property type="entry name" value="isopep_sspB_C2"/>
    <property type="match status" value="1"/>
</dbReference>
<dbReference type="NCBIfam" id="TIGR01167">
    <property type="entry name" value="LPXTG_anchor"/>
    <property type="match status" value="1"/>
</dbReference>
<dbReference type="NCBIfam" id="NF033804">
    <property type="entry name" value="Streccoc_I_II"/>
    <property type="match status" value="1"/>
</dbReference>
<dbReference type="NCBIfam" id="TIGR03726">
    <property type="entry name" value="strep_RK_lipo"/>
    <property type="match status" value="1"/>
</dbReference>
<dbReference type="PANTHER" id="PTHR24216:SF65">
    <property type="entry name" value="PAXILLIN-LIKE PROTEIN 1"/>
    <property type="match status" value="1"/>
</dbReference>
<dbReference type="PANTHER" id="PTHR24216">
    <property type="entry name" value="PAXILLIN-RELATED"/>
    <property type="match status" value="1"/>
</dbReference>
<dbReference type="Pfam" id="PF18652">
    <property type="entry name" value="Adhesin_P1_N"/>
    <property type="match status" value="1"/>
</dbReference>
<dbReference type="Pfam" id="PF17998">
    <property type="entry name" value="AgI_II_C2"/>
    <property type="match status" value="1"/>
</dbReference>
<dbReference type="Pfam" id="PF16364">
    <property type="entry name" value="Antigen_C"/>
    <property type="match status" value="1"/>
</dbReference>
<dbReference type="Pfam" id="PF08363">
    <property type="entry name" value="GbpC"/>
    <property type="match status" value="1"/>
</dbReference>
<dbReference type="Pfam" id="PF00746">
    <property type="entry name" value="Gram_pos_anchor"/>
    <property type="match status" value="1"/>
</dbReference>
<dbReference type="Pfam" id="PF06696">
    <property type="entry name" value="Strep_SA_rep"/>
    <property type="match status" value="5"/>
</dbReference>
<dbReference type="PRINTS" id="PR01217">
    <property type="entry name" value="PRICHEXTENSN"/>
</dbReference>
<dbReference type="SUPFAM" id="SSF74914">
    <property type="entry name" value="V-region of surface antigen I/II (SA I/II, PAC)"/>
    <property type="match status" value="1"/>
</dbReference>
<dbReference type="PROSITE" id="PS51965">
    <property type="entry name" value="AG_I_II_AR"/>
    <property type="match status" value="4"/>
</dbReference>
<dbReference type="PROSITE" id="PS50847">
    <property type="entry name" value="GRAM_POS_ANCHORING"/>
    <property type="match status" value="1"/>
</dbReference>
<sequence length="1499" mass="163982">MQKREVFGFRKSKVAKTLCGAVLGAALIAIADQQVLADEVTETNSTANVAVTTTGNPATNLPEAQGEATEAASQSQAQAGSKDGALPVEVSADDLNKAVTDAKAAGVNVVQDQTSDKGTATTAAENAQKQAEIKSDYAKQAEEIKKTTEAYKKEVEAHQAETDKINAENKAAEDKYQEDLKAHQAEVEKINTANATAKAEYEAKLAQYQKDLAAVQKANEDSQLDYQNKLSAYQAELARVQKANAEAKEAYEKAVKENTAKNAALQAENEAIKQRNETAKANYDAAMKQYEADLAAIKKAKEDNDADYQAKLAAYQAELARVQKANADAKAAYEKAVEENTAKNTAIQAENEAIKQRNETAKATYEAAVKQYEADLAAVKQANATNEADYQAKLAAYQTELARVQKANADAKATYEKAVEDNKAKNAALQAENEEIKQRNAAAKTDYEAKLAKYEADLAKYKKDFAAYTAALAEAESKKKQDGYLSEPRSQSLNFKSEPNAIRTIDSSVHQYGQQELDALVKSWGISPTNPDRKKSTAYSYFNAINSNNTYAKLVLEKDKPVDVTYTGLKNSSFNGKKISKVVYTYTLKETGFNDGTKMTMFASSDPTVTAWYNDYFTSTNINVKVKFYDEEGQLMNLTGGLVNFSSLNRGNGSGAIDKDAIESVRNFNGRYIPISGSSIKIHENNSAYADSSNAEKSRGARWDTSEWDTTSSPNNWYGAIVGEITQSEISFNMASSKSGNIWFAFNSNINAIGVPTKPVAPTAPTQPMYETEKPLEPAPVVPTYENEPTPPVKTPDQPEPSKPEEPTYETEKPLEPAPVAPTYENEPTPPVKIPDQPEPSKPEEPTYETEKPLEPAPVAPTYENEPTPPVKTPDQPEPSKPEEPTYDPLPTPPLAPTPKQLPTPPVVPTVHFHYSSLLAQPQINKEIKNEDGVDIDRTLVAKQSIVKFELKTEALTAGRPKTTSFVLVDPLPTGYKFDLDATKAASTGFDTTYDEASHTVTFKATDETLATYNADLTKPVETLHPTVVGRVLNDGATYTNNFTLTVNDAYGIKSNVVRVTTPGKPNDPDNPNNNYIKPTKVNKNKEGLNIDGKEVLAGSTNYYELTWDLDQYKGDKSSKEAIQNGFYYVDDYPEEALDVRPDLVKVADEKGNQVSGVSVQQYDSLEAAPKKVQDLLKKANITVKGAFQLFSADNPEEFYKQYVSTGTSLVITDPMTVKSEFGKTGGKYENKAYQIDFGNGYATEVVVNNVPKITPKKDVTVSLDPTSENLDGQTVQLYQTFNYRLIGGLIPQNHSEELEDYSFVDDYDQAGDQYTGNYKTFSSLNLTMKDGSVIKAGTDLTSQTTAETDATNGIVTVRFKEDFLQKISLDSPFQAETYLQMRRIAIGTFENTYVNTVNKVAYASNTVRTTTPIPRTPDKPTPIPTPKPKDPDKPETPKEPKVPSPKVEDPSAPIPVSVGKELTTLPKTGTNDATYMPYLGLAALVGFLGLGLAKRKED</sequence>
<evidence type="ECO:0000255" key="1"/>
<evidence type="ECO:0000255" key="2">
    <source>
        <dbReference type="PROSITE-ProRule" id="PRU00477"/>
    </source>
</evidence>
<evidence type="ECO:0000255" key="3">
    <source>
        <dbReference type="PROSITE-ProRule" id="PRU01310"/>
    </source>
</evidence>
<evidence type="ECO:0000256" key="4">
    <source>
        <dbReference type="SAM" id="MobiDB-lite"/>
    </source>
</evidence>
<evidence type="ECO:0000269" key="5">
    <source>
    </source>
</evidence>
<evidence type="ECO:0000269" key="6">
    <source>
    </source>
</evidence>
<evidence type="ECO:0000269" key="7">
    <source>
    </source>
</evidence>
<evidence type="ECO:0000269" key="8">
    <source>
    </source>
</evidence>
<evidence type="ECO:0000303" key="9">
    <source>
    </source>
</evidence>
<evidence type="ECO:0000305" key="10"/>
<evidence type="ECO:0000305" key="11">
    <source>
    </source>
</evidence>